<name>HLY2_ACTPL</name>
<gene>
    <name type="primary">hly</name>
</gene>
<comment type="subcellular location">
    <subcellularLocation>
        <location evidence="3">Periplasm</location>
    </subcellularLocation>
</comment>
<dbReference type="EMBL" id="S57691">
    <property type="protein sequence ID" value="AAB26060.1"/>
    <property type="molecule type" value="Genomic_DNA"/>
</dbReference>
<dbReference type="SMR" id="P46028"/>
<dbReference type="GO" id="GO:0042597">
    <property type="term" value="C:periplasmic space"/>
    <property type="evidence" value="ECO:0007669"/>
    <property type="project" value="UniProtKB-SubCell"/>
</dbReference>
<dbReference type="GO" id="GO:0031640">
    <property type="term" value="P:killing of cells of another organism"/>
    <property type="evidence" value="ECO:0007669"/>
    <property type="project" value="UniProtKB-KW"/>
</dbReference>
<dbReference type="Gene3D" id="3.30.1340.30">
    <property type="match status" value="1"/>
</dbReference>
<dbReference type="InterPro" id="IPR007055">
    <property type="entry name" value="BON_dom"/>
</dbReference>
<dbReference type="InterPro" id="IPR051686">
    <property type="entry name" value="Lipoprotein_DolP"/>
</dbReference>
<dbReference type="InterPro" id="IPR014004">
    <property type="entry name" value="Transpt-assoc_nodulatn_dom_bac"/>
</dbReference>
<dbReference type="NCBIfam" id="NF008247">
    <property type="entry name" value="PRK11023.1"/>
    <property type="match status" value="1"/>
</dbReference>
<dbReference type="PANTHER" id="PTHR34606">
    <property type="entry name" value="BON DOMAIN-CONTAINING PROTEIN"/>
    <property type="match status" value="1"/>
</dbReference>
<dbReference type="PANTHER" id="PTHR34606:SF4">
    <property type="entry name" value="OUTER MEMBRANE LIPOPROTEIN DOLP"/>
    <property type="match status" value="1"/>
</dbReference>
<dbReference type="Pfam" id="PF04972">
    <property type="entry name" value="BON"/>
    <property type="match status" value="2"/>
</dbReference>
<dbReference type="SMART" id="SM00749">
    <property type="entry name" value="BON"/>
    <property type="match status" value="2"/>
</dbReference>
<dbReference type="PROSITE" id="PS50914">
    <property type="entry name" value="BON"/>
    <property type="match status" value="2"/>
</dbReference>
<feature type="signal peptide" evidence="1">
    <location>
        <begin position="1"/>
        <end position="19"/>
    </location>
</feature>
<feature type="chain" id="PRO_0000013913" description="21 kDa hemolysin">
    <location>
        <begin position="20"/>
        <end position="194"/>
    </location>
</feature>
<feature type="domain" description="BON 1" evidence="2">
    <location>
        <begin position="49"/>
        <end position="118"/>
    </location>
</feature>
<feature type="domain" description="BON 2" evidence="2">
    <location>
        <begin position="127"/>
        <end position="194"/>
    </location>
</feature>
<reference key="1">
    <citation type="journal article" date="1993" name="J. Vet. Med. Sci.">
        <title>A cryptic DNA sequence, isolated from Actinobacillus pleuropneumoniae, confers a hemolytic activity upon Escherichia coli K12 strains.</title>
        <authorList>
            <person name="Ito H."/>
            <person name="Uchida I."/>
            <person name="Sekizaki T."/>
            <person name="Terakado N."/>
        </authorList>
    </citation>
    <scope>NUCLEOTIDE SEQUENCE [GENOMIC DNA]</scope>
    <source>
        <strain>K17 / Serotype 5</strain>
    </source>
</reference>
<keyword id="KW-0204">Cytolysis</keyword>
<keyword id="KW-0354">Hemolysis</keyword>
<keyword id="KW-0574">Periplasm</keyword>
<keyword id="KW-0677">Repeat</keyword>
<keyword id="KW-0732">Signal</keyword>
<evidence type="ECO:0000255" key="1"/>
<evidence type="ECO:0000255" key="2">
    <source>
        <dbReference type="PROSITE-ProRule" id="PRU00229"/>
    </source>
</evidence>
<evidence type="ECO:0000305" key="3"/>
<organism>
    <name type="scientific">Actinobacillus pleuropneumoniae</name>
    <name type="common">Haemophilus pleuropneumoniae</name>
    <dbReference type="NCBI Taxonomy" id="715"/>
    <lineage>
        <taxon>Bacteria</taxon>
        <taxon>Pseudomonadati</taxon>
        <taxon>Pseudomonadota</taxon>
        <taxon>Gammaproteobacteria</taxon>
        <taxon>Pasteurellales</taxon>
        <taxon>Pasteurellaceae</taxon>
        <taxon>Actinobacillus</taxon>
    </lineage>
</organism>
<accession>P46028</accession>
<proteinExistence type="inferred from homology"/>
<protein>
    <recommendedName>
        <fullName>21 kDa hemolysin</fullName>
    </recommendedName>
</protein>
<sequence>MRTRSRSTVRPLWPPPSPARFATWSHYRLRDHGDHTRPVDPRSAGTQVDDEVLEERVAYNLSKDAQLKEEARINVVAYNGKVLLIGQAPTMSASESAKNLAAGAEGVTEIYNEIRTGEKIGVGQISIDSWITTAIKSKLLANSEVKATEVKVITENGEVFLIGKLSPAQADAAAEVARNVRGVNKVIKVINYVQ</sequence>